<reference key="1">
    <citation type="journal article" date="1991" name="Nucleic Acids Res.">
        <title>Nucleotide sequence of the genes encoding the L30, S12 and S7 equivalent ribosomal proteins from the archaeum Thermococcus celer.</title>
        <authorList>
            <person name="Klenk H.-P."/>
            <person name="Schwass V."/>
            <person name="Zillig W."/>
        </authorList>
    </citation>
    <scope>NUCLEOTIDE SEQUENCE [GENOMIC DNA]</scope>
    <source>
        <strain>ATCC 35543 / DSM 2476 / JCM 8558 / Vu 13</strain>
    </source>
</reference>
<proteinExistence type="evidence at protein level"/>
<sequence length="101" mass="10967">MVDFAFELRKAQDTGKIVMGARKSIQYAKMGGAKLIIVARNARPDIKEDIEYYARLSGIPVYEFEGTSVELGTLLGRPHTVSALAVVDPGESRILALGGKE</sequence>
<comment type="similarity">
    <text evidence="1">Belongs to the eukaryotic ribosomal protein eL30 family.</text>
</comment>
<dbReference type="EMBL" id="X60305">
    <property type="protein sequence ID" value="CAA42847.1"/>
    <property type="molecule type" value="Genomic_DNA"/>
</dbReference>
<dbReference type="EMBL" id="X67313">
    <property type="protein sequence ID" value="CAA47725.1"/>
    <property type="molecule type" value="Genomic_DNA"/>
</dbReference>
<dbReference type="PIR" id="S18711">
    <property type="entry name" value="S18711"/>
</dbReference>
<dbReference type="PDB" id="1GO0">
    <property type="method" value="NMR"/>
    <property type="chains" value="A=2-101"/>
</dbReference>
<dbReference type="PDB" id="1GO1">
    <property type="method" value="NMR"/>
    <property type="chains" value="A=2-101"/>
</dbReference>
<dbReference type="PDB" id="1H7M">
    <property type="method" value="X-ray"/>
    <property type="resolution" value="1.96 A"/>
    <property type="chains" value="A=2-101"/>
</dbReference>
<dbReference type="PDB" id="1W3E">
    <property type="method" value="X-ray"/>
    <property type="resolution" value="1.77 A"/>
    <property type="chains" value="X=1-101"/>
</dbReference>
<dbReference type="PDB" id="1W40">
    <property type="method" value="X-ray"/>
    <property type="resolution" value="2.03 A"/>
    <property type="chains" value="A=1-101"/>
</dbReference>
<dbReference type="PDB" id="1W41">
    <property type="method" value="X-ray"/>
    <property type="resolution" value="1.70 A"/>
    <property type="chains" value="A=1-101"/>
</dbReference>
<dbReference type="PDB" id="1W42">
    <property type="method" value="X-ray"/>
    <property type="resolution" value="1.80 A"/>
    <property type="chains" value="A=1-101"/>
</dbReference>
<dbReference type="PDB" id="2BO1">
    <property type="method" value="X-ray"/>
    <property type="resolution" value="1.70 A"/>
    <property type="chains" value="A=1-101"/>
</dbReference>
<dbReference type="PDB" id="3LFO">
    <property type="method" value="X-ray"/>
    <property type="resolution" value="1.80 A"/>
    <property type="chains" value="A=1-101"/>
</dbReference>
<dbReference type="PDB" id="3N4Y">
    <property type="method" value="X-ray"/>
    <property type="resolution" value="2.40 A"/>
    <property type="chains" value="A=1-101"/>
</dbReference>
<dbReference type="PDB" id="3N4Z">
    <property type="method" value="X-ray"/>
    <property type="resolution" value="2.40 A"/>
    <property type="chains" value="A/B=1-101"/>
</dbReference>
<dbReference type="PDB" id="3RA5">
    <property type="method" value="X-ray"/>
    <property type="resolution" value="1.80 A"/>
    <property type="chains" value="A/B=1-101"/>
</dbReference>
<dbReference type="PDB" id="3RA6">
    <property type="method" value="X-ray"/>
    <property type="resolution" value="2.00 A"/>
    <property type="chains" value="A=1-101"/>
</dbReference>
<dbReference type="PDBsum" id="1GO0"/>
<dbReference type="PDBsum" id="1GO1"/>
<dbReference type="PDBsum" id="1H7M"/>
<dbReference type="PDBsum" id="1W3E"/>
<dbReference type="PDBsum" id="1W40"/>
<dbReference type="PDBsum" id="1W41"/>
<dbReference type="PDBsum" id="1W42"/>
<dbReference type="PDBsum" id="2BO1"/>
<dbReference type="PDBsum" id="3LFO"/>
<dbReference type="PDBsum" id="3N4Y"/>
<dbReference type="PDBsum" id="3N4Z"/>
<dbReference type="PDBsum" id="3RA5"/>
<dbReference type="PDBsum" id="3RA6"/>
<dbReference type="BMRB" id="P29160"/>
<dbReference type="SMR" id="P29160"/>
<dbReference type="EvolutionaryTrace" id="P29160"/>
<dbReference type="GO" id="GO:0022625">
    <property type="term" value="C:cytosolic large ribosomal subunit"/>
    <property type="evidence" value="ECO:0007669"/>
    <property type="project" value="InterPro"/>
</dbReference>
<dbReference type="GO" id="GO:0003723">
    <property type="term" value="F:RNA binding"/>
    <property type="evidence" value="ECO:0007669"/>
    <property type="project" value="InterPro"/>
</dbReference>
<dbReference type="GO" id="GO:0003735">
    <property type="term" value="F:structural constituent of ribosome"/>
    <property type="evidence" value="ECO:0007669"/>
    <property type="project" value="InterPro"/>
</dbReference>
<dbReference type="GO" id="GO:0006412">
    <property type="term" value="P:translation"/>
    <property type="evidence" value="ECO:0007669"/>
    <property type="project" value="UniProtKB-UniRule"/>
</dbReference>
<dbReference type="FunFam" id="3.30.1330.30:FF:000053">
    <property type="entry name" value="50S ribosomal protein L30e"/>
    <property type="match status" value="1"/>
</dbReference>
<dbReference type="Gene3D" id="3.30.1330.30">
    <property type="match status" value="1"/>
</dbReference>
<dbReference type="HAMAP" id="MF_00481">
    <property type="entry name" value="Ribosomal_eL30"/>
    <property type="match status" value="1"/>
</dbReference>
<dbReference type="InterPro" id="IPR000231">
    <property type="entry name" value="Ribosomal_eL30"/>
</dbReference>
<dbReference type="InterPro" id="IPR039109">
    <property type="entry name" value="Ribosomal_eL30-like"/>
</dbReference>
<dbReference type="InterPro" id="IPR029064">
    <property type="entry name" value="Ribosomal_eL30-like_sf"/>
</dbReference>
<dbReference type="InterPro" id="IPR022991">
    <property type="entry name" value="Ribosomal_eL30_CS"/>
</dbReference>
<dbReference type="InterPro" id="IPR004038">
    <property type="entry name" value="Ribosomal_eL8/eL30/eS12/Gad45"/>
</dbReference>
<dbReference type="NCBIfam" id="NF002172">
    <property type="entry name" value="PRK01018.1"/>
    <property type="match status" value="1"/>
</dbReference>
<dbReference type="PANTHER" id="PTHR11449">
    <property type="entry name" value="RIBOSOMAL PROTEIN L30"/>
    <property type="match status" value="1"/>
</dbReference>
<dbReference type="Pfam" id="PF01248">
    <property type="entry name" value="Ribosomal_L7Ae"/>
    <property type="match status" value="1"/>
</dbReference>
<dbReference type="SUPFAM" id="SSF55315">
    <property type="entry name" value="L30e-like"/>
    <property type="match status" value="1"/>
</dbReference>
<dbReference type="PROSITE" id="PS00709">
    <property type="entry name" value="RIBOSOMAL_L30E_1"/>
    <property type="match status" value="1"/>
</dbReference>
<dbReference type="PROSITE" id="PS00993">
    <property type="entry name" value="RIBOSOMAL_L30E_2"/>
    <property type="match status" value="1"/>
</dbReference>
<feature type="chain" id="PRO_0000146161" description="Large ribosomal subunit protein eL30">
    <location>
        <begin position="1"/>
        <end position="101"/>
    </location>
</feature>
<feature type="helix" evidence="3">
    <location>
        <begin position="4"/>
        <end position="14"/>
    </location>
</feature>
<feature type="strand" evidence="3">
    <location>
        <begin position="15"/>
        <end position="20"/>
    </location>
</feature>
<feature type="helix" evidence="3">
    <location>
        <begin position="21"/>
        <end position="30"/>
    </location>
</feature>
<feature type="strand" evidence="3">
    <location>
        <begin position="34"/>
        <end position="39"/>
    </location>
</feature>
<feature type="helix" evidence="3">
    <location>
        <begin position="44"/>
        <end position="57"/>
    </location>
</feature>
<feature type="strand" evidence="3">
    <location>
        <begin position="61"/>
        <end position="66"/>
    </location>
</feature>
<feature type="helix" evidence="3">
    <location>
        <begin position="68"/>
        <end position="74"/>
    </location>
</feature>
<feature type="turn" evidence="2">
    <location>
        <begin position="78"/>
        <end position="80"/>
    </location>
</feature>
<feature type="strand" evidence="3">
    <location>
        <begin position="83"/>
        <end position="88"/>
    </location>
</feature>
<feature type="helix" evidence="3">
    <location>
        <begin position="94"/>
        <end position="98"/>
    </location>
</feature>
<evidence type="ECO:0000305" key="1"/>
<evidence type="ECO:0007829" key="2">
    <source>
        <dbReference type="PDB" id="1GO0"/>
    </source>
</evidence>
<evidence type="ECO:0007829" key="3">
    <source>
        <dbReference type="PDB" id="1W41"/>
    </source>
</evidence>
<accession>P29160</accession>
<keyword id="KW-0002">3D-structure</keyword>
<keyword id="KW-0687">Ribonucleoprotein</keyword>
<keyword id="KW-0689">Ribosomal protein</keyword>
<organism>
    <name type="scientific">Thermococcus celer</name>
    <dbReference type="NCBI Taxonomy" id="2264"/>
    <lineage>
        <taxon>Archaea</taxon>
        <taxon>Methanobacteriati</taxon>
        <taxon>Methanobacteriota</taxon>
        <taxon>Thermococci</taxon>
        <taxon>Thermococcales</taxon>
        <taxon>Thermococcaceae</taxon>
        <taxon>Thermococcus</taxon>
    </lineage>
</organism>
<protein>
    <recommendedName>
        <fullName evidence="1">Large ribosomal subunit protein eL30</fullName>
    </recommendedName>
    <alternativeName>
        <fullName>50S ribosomal protein L30e</fullName>
    </alternativeName>
</protein>
<gene>
    <name type="primary">rpl30e</name>
    <name type="synonym">rpl30</name>
</gene>
<name>RL30E_THECE</name>